<protein>
    <recommendedName>
        <fullName evidence="1">Sec-independent protein translocase protein TatA</fullName>
    </recommendedName>
</protein>
<feature type="chain" id="PRO_1000044444" description="Sec-independent protein translocase protein TatA">
    <location>
        <begin position="1"/>
        <end position="79"/>
    </location>
</feature>
<feature type="transmembrane region" description="Helical" evidence="1">
    <location>
        <begin position="1"/>
        <end position="21"/>
    </location>
</feature>
<feature type="region of interest" description="Disordered" evidence="2">
    <location>
        <begin position="43"/>
        <end position="79"/>
    </location>
</feature>
<feature type="compositionally biased region" description="Basic and acidic residues" evidence="2">
    <location>
        <begin position="46"/>
        <end position="57"/>
    </location>
</feature>
<feature type="compositionally biased region" description="Low complexity" evidence="2">
    <location>
        <begin position="58"/>
        <end position="67"/>
    </location>
</feature>
<feature type="compositionally biased region" description="Basic and acidic residues" evidence="2">
    <location>
        <begin position="68"/>
        <end position="79"/>
    </location>
</feature>
<gene>
    <name evidence="1" type="primary">tatA</name>
    <name type="ordered locus">Sputcn32_0503</name>
</gene>
<proteinExistence type="inferred from homology"/>
<evidence type="ECO:0000255" key="1">
    <source>
        <dbReference type="HAMAP-Rule" id="MF_00236"/>
    </source>
</evidence>
<evidence type="ECO:0000256" key="2">
    <source>
        <dbReference type="SAM" id="MobiDB-lite"/>
    </source>
</evidence>
<accession>A4Y2Q2</accession>
<keyword id="KW-0997">Cell inner membrane</keyword>
<keyword id="KW-1003">Cell membrane</keyword>
<keyword id="KW-0472">Membrane</keyword>
<keyword id="KW-0653">Protein transport</keyword>
<keyword id="KW-0811">Translocation</keyword>
<keyword id="KW-0812">Transmembrane</keyword>
<keyword id="KW-1133">Transmembrane helix</keyword>
<keyword id="KW-0813">Transport</keyword>
<reference key="1">
    <citation type="submission" date="2007-04" db="EMBL/GenBank/DDBJ databases">
        <title>Complete sequence of Shewanella putrefaciens CN-32.</title>
        <authorList>
            <consortium name="US DOE Joint Genome Institute"/>
            <person name="Copeland A."/>
            <person name="Lucas S."/>
            <person name="Lapidus A."/>
            <person name="Barry K."/>
            <person name="Detter J.C."/>
            <person name="Glavina del Rio T."/>
            <person name="Hammon N."/>
            <person name="Israni S."/>
            <person name="Dalin E."/>
            <person name="Tice H."/>
            <person name="Pitluck S."/>
            <person name="Chain P."/>
            <person name="Malfatti S."/>
            <person name="Shin M."/>
            <person name="Vergez L."/>
            <person name="Schmutz J."/>
            <person name="Larimer F."/>
            <person name="Land M."/>
            <person name="Hauser L."/>
            <person name="Kyrpides N."/>
            <person name="Mikhailova N."/>
            <person name="Romine M.F."/>
            <person name="Fredrickson J."/>
            <person name="Tiedje J."/>
            <person name="Richardson P."/>
        </authorList>
    </citation>
    <scope>NUCLEOTIDE SEQUENCE [LARGE SCALE GENOMIC DNA]</scope>
    <source>
        <strain>CN-32 / ATCC BAA-453</strain>
    </source>
</reference>
<sequence>MGGISIWQLLIIALIVVLLFGTKKLRSLGGDLGGAVKGFKNAMSSEEDKKALEDTEAAKTAQTTQQATEKKPESNKEQA</sequence>
<organism>
    <name type="scientific">Shewanella putrefaciens (strain CN-32 / ATCC BAA-453)</name>
    <dbReference type="NCBI Taxonomy" id="319224"/>
    <lineage>
        <taxon>Bacteria</taxon>
        <taxon>Pseudomonadati</taxon>
        <taxon>Pseudomonadota</taxon>
        <taxon>Gammaproteobacteria</taxon>
        <taxon>Alteromonadales</taxon>
        <taxon>Shewanellaceae</taxon>
        <taxon>Shewanella</taxon>
    </lineage>
</organism>
<dbReference type="EMBL" id="CP000681">
    <property type="protein sequence ID" value="ABP74235.1"/>
    <property type="molecule type" value="Genomic_DNA"/>
</dbReference>
<dbReference type="SMR" id="A4Y2Q2"/>
<dbReference type="STRING" id="319224.Sputcn32_0503"/>
<dbReference type="KEGG" id="spc:Sputcn32_0503"/>
<dbReference type="eggNOG" id="COG1826">
    <property type="taxonomic scope" value="Bacteria"/>
</dbReference>
<dbReference type="HOGENOM" id="CLU_086034_5_1_6"/>
<dbReference type="GO" id="GO:0033281">
    <property type="term" value="C:TAT protein transport complex"/>
    <property type="evidence" value="ECO:0007669"/>
    <property type="project" value="UniProtKB-UniRule"/>
</dbReference>
<dbReference type="GO" id="GO:0008320">
    <property type="term" value="F:protein transmembrane transporter activity"/>
    <property type="evidence" value="ECO:0007669"/>
    <property type="project" value="UniProtKB-UniRule"/>
</dbReference>
<dbReference type="GO" id="GO:0043953">
    <property type="term" value="P:protein transport by the Tat complex"/>
    <property type="evidence" value="ECO:0007669"/>
    <property type="project" value="UniProtKB-UniRule"/>
</dbReference>
<dbReference type="Gene3D" id="1.20.5.3310">
    <property type="match status" value="1"/>
</dbReference>
<dbReference type="HAMAP" id="MF_00236">
    <property type="entry name" value="TatA_E"/>
    <property type="match status" value="1"/>
</dbReference>
<dbReference type="InterPro" id="IPR003369">
    <property type="entry name" value="TatA/B/E"/>
</dbReference>
<dbReference type="InterPro" id="IPR006312">
    <property type="entry name" value="TatA/E"/>
</dbReference>
<dbReference type="NCBIfam" id="NF002813">
    <property type="entry name" value="PRK02958.1"/>
    <property type="match status" value="1"/>
</dbReference>
<dbReference type="NCBIfam" id="TIGR01411">
    <property type="entry name" value="tatAE"/>
    <property type="match status" value="1"/>
</dbReference>
<dbReference type="PANTHER" id="PTHR42982">
    <property type="entry name" value="SEC-INDEPENDENT PROTEIN TRANSLOCASE PROTEIN TATA"/>
    <property type="match status" value="1"/>
</dbReference>
<dbReference type="PANTHER" id="PTHR42982:SF1">
    <property type="entry name" value="SEC-INDEPENDENT PROTEIN TRANSLOCASE PROTEIN TATA"/>
    <property type="match status" value="1"/>
</dbReference>
<dbReference type="Pfam" id="PF02416">
    <property type="entry name" value="TatA_B_E"/>
    <property type="match status" value="1"/>
</dbReference>
<comment type="function">
    <text evidence="1">Part of the twin-arginine translocation (Tat) system that transports large folded proteins containing a characteristic twin-arginine motif in their signal peptide across membranes. TatA could form the protein-conducting channel of the Tat system.</text>
</comment>
<comment type="subunit">
    <text evidence="1">The Tat system comprises two distinct complexes: a TatABC complex, containing multiple copies of TatA, TatB and TatC subunits, and a separate TatA complex, containing only TatA subunits. Substrates initially bind to the TatABC complex, which probably triggers association of the separate TatA complex to form the active translocon.</text>
</comment>
<comment type="subcellular location">
    <subcellularLocation>
        <location evidence="1">Cell inner membrane</location>
        <topology evidence="1">Single-pass membrane protein</topology>
    </subcellularLocation>
</comment>
<comment type="similarity">
    <text evidence="1">Belongs to the TatA/E family.</text>
</comment>
<name>TATA_SHEPC</name>